<reference key="1">
    <citation type="journal article" date="1997" name="Nature">
        <title>The nucleotide sequence of Saccharomyces cerevisiae chromosome XV.</title>
        <authorList>
            <person name="Dujon B."/>
            <person name="Albermann K."/>
            <person name="Aldea M."/>
            <person name="Alexandraki D."/>
            <person name="Ansorge W."/>
            <person name="Arino J."/>
            <person name="Benes V."/>
            <person name="Bohn C."/>
            <person name="Bolotin-Fukuhara M."/>
            <person name="Bordonne R."/>
            <person name="Boyer J."/>
            <person name="Camasses A."/>
            <person name="Casamayor A."/>
            <person name="Casas C."/>
            <person name="Cheret G."/>
            <person name="Cziepluch C."/>
            <person name="Daignan-Fornier B."/>
            <person name="Dang V.-D."/>
            <person name="de Haan M."/>
            <person name="Delius H."/>
            <person name="Durand P."/>
            <person name="Fairhead C."/>
            <person name="Feldmann H."/>
            <person name="Gaillon L."/>
            <person name="Galisson F."/>
            <person name="Gamo F.-J."/>
            <person name="Gancedo C."/>
            <person name="Goffeau A."/>
            <person name="Goulding S.E."/>
            <person name="Grivell L.A."/>
            <person name="Habbig B."/>
            <person name="Hand N.J."/>
            <person name="Hani J."/>
            <person name="Hattenhorst U."/>
            <person name="Hebling U."/>
            <person name="Hernando Y."/>
            <person name="Herrero E."/>
            <person name="Heumann K."/>
            <person name="Hiesel R."/>
            <person name="Hilger F."/>
            <person name="Hofmann B."/>
            <person name="Hollenberg C.P."/>
            <person name="Hughes B."/>
            <person name="Jauniaux J.-C."/>
            <person name="Kalogeropoulos A."/>
            <person name="Katsoulou C."/>
            <person name="Kordes E."/>
            <person name="Lafuente M.J."/>
            <person name="Landt O."/>
            <person name="Louis E.J."/>
            <person name="Maarse A.C."/>
            <person name="Madania A."/>
            <person name="Mannhaupt G."/>
            <person name="Marck C."/>
            <person name="Martin R.P."/>
            <person name="Mewes H.-W."/>
            <person name="Michaux G."/>
            <person name="Paces V."/>
            <person name="Parle-McDermott A.G."/>
            <person name="Pearson B.M."/>
            <person name="Perrin A."/>
            <person name="Pettersson B."/>
            <person name="Poch O."/>
            <person name="Pohl T.M."/>
            <person name="Poirey R."/>
            <person name="Portetelle D."/>
            <person name="Pujol A."/>
            <person name="Purnelle B."/>
            <person name="Ramezani Rad M."/>
            <person name="Rechmann S."/>
            <person name="Schwager C."/>
            <person name="Schweizer M."/>
            <person name="Sor F."/>
            <person name="Sterky F."/>
            <person name="Tarassov I.A."/>
            <person name="Teodoru C."/>
            <person name="Tettelin H."/>
            <person name="Thierry A."/>
            <person name="Tobiasch E."/>
            <person name="Tzermia M."/>
            <person name="Uhlen M."/>
            <person name="Unseld M."/>
            <person name="Valens M."/>
            <person name="Vandenbol M."/>
            <person name="Vetter I."/>
            <person name="Vlcek C."/>
            <person name="Voet M."/>
            <person name="Volckaert G."/>
            <person name="Voss H."/>
            <person name="Wambutt R."/>
            <person name="Wedler H."/>
            <person name="Wiemann S."/>
            <person name="Winsor B."/>
            <person name="Wolfe K.H."/>
            <person name="Zollner A."/>
            <person name="Zumstein E."/>
            <person name="Kleine K."/>
        </authorList>
    </citation>
    <scope>NUCLEOTIDE SEQUENCE [LARGE SCALE GENOMIC DNA]</scope>
    <source>
        <strain>ATCC 204508 / S288c</strain>
    </source>
</reference>
<reference key="2">
    <citation type="journal article" date="2014" name="G3 (Bethesda)">
        <title>The reference genome sequence of Saccharomyces cerevisiae: Then and now.</title>
        <authorList>
            <person name="Engel S.R."/>
            <person name="Dietrich F.S."/>
            <person name="Fisk D.G."/>
            <person name="Binkley G."/>
            <person name="Balakrishnan R."/>
            <person name="Costanzo M.C."/>
            <person name="Dwight S.S."/>
            <person name="Hitz B.C."/>
            <person name="Karra K."/>
            <person name="Nash R.S."/>
            <person name="Weng S."/>
            <person name="Wong E.D."/>
            <person name="Lloyd P."/>
            <person name="Skrzypek M.S."/>
            <person name="Miyasato S.R."/>
            <person name="Simison M."/>
            <person name="Cherry J.M."/>
        </authorList>
    </citation>
    <scope>GENOME REANNOTATION</scope>
    <source>
        <strain>ATCC 204508 / S288c</strain>
    </source>
</reference>
<reference key="3">
    <citation type="journal article" date="2003" name="Genome Res.">
        <title>Systematic discovery of new genes in the Saccharomyces cerevisiae genome.</title>
        <authorList>
            <person name="Kessler M.M."/>
            <person name="Zeng Q."/>
            <person name="Hogan S."/>
            <person name="Cook R."/>
            <person name="Morales A.J."/>
            <person name="Cottarel G."/>
        </authorList>
    </citation>
    <scope>GENOME REANNOTATION</scope>
</reference>
<gene>
    <name type="ordered locus">YOR011W-A</name>
</gene>
<feature type="chain" id="PRO_0000235936" description="Uncharacterized protein YOR011W-A">
    <location>
        <begin position="1"/>
        <end position="68"/>
    </location>
</feature>
<keyword id="KW-1185">Reference proteome</keyword>
<dbReference type="EMBL" id="Z74920">
    <property type="status" value="NOT_ANNOTATED_CDS"/>
    <property type="molecule type" value="Genomic_DNA"/>
</dbReference>
<dbReference type="EMBL" id="BK006948">
    <property type="protein sequence ID" value="DAA10795.1"/>
    <property type="molecule type" value="Genomic_DNA"/>
</dbReference>
<dbReference type="RefSeq" id="NP_878167.1">
    <property type="nucleotide sequence ID" value="NM_001184576.1"/>
</dbReference>
<dbReference type="BioGRID" id="37021">
    <property type="interactions" value="28"/>
</dbReference>
<dbReference type="STRING" id="4932.YOR011W-A"/>
<dbReference type="PaxDb" id="4932-YOR011W-A"/>
<dbReference type="EnsemblFungi" id="YOR011W-A_mRNA">
    <property type="protein sequence ID" value="YOR011W-A"/>
    <property type="gene ID" value="YOR011W-A"/>
</dbReference>
<dbReference type="GeneID" id="1466479"/>
<dbReference type="KEGG" id="sce:YOR011W-A"/>
<dbReference type="AGR" id="SGD:S000028581"/>
<dbReference type="SGD" id="S000028581">
    <property type="gene designation" value="YOR011W-A"/>
</dbReference>
<dbReference type="VEuPathDB" id="FungiDB:YOR011W-A"/>
<dbReference type="HOGENOM" id="CLU_2905445_0_0_1"/>
<dbReference type="InParanoid" id="Q3E807"/>
<dbReference type="OrthoDB" id="10370910at2759"/>
<dbReference type="BioCyc" id="YEAST:G3O-33901-MONOMER"/>
<dbReference type="BioGRID-ORCS" id="1466479">
    <property type="hits" value="0 hits in 10 CRISPR screens"/>
</dbReference>
<dbReference type="PRO" id="PR:Q3E807"/>
<dbReference type="Proteomes" id="UP000002311">
    <property type="component" value="Chromosome XV"/>
</dbReference>
<dbReference type="RNAct" id="Q3E807">
    <property type="molecule type" value="protein"/>
</dbReference>
<organism>
    <name type="scientific">Saccharomyces cerevisiae (strain ATCC 204508 / S288c)</name>
    <name type="common">Baker's yeast</name>
    <dbReference type="NCBI Taxonomy" id="559292"/>
    <lineage>
        <taxon>Eukaryota</taxon>
        <taxon>Fungi</taxon>
        <taxon>Dikarya</taxon>
        <taxon>Ascomycota</taxon>
        <taxon>Saccharomycotina</taxon>
        <taxon>Saccharomycetes</taxon>
        <taxon>Saccharomycetales</taxon>
        <taxon>Saccharomycetaceae</taxon>
        <taxon>Saccharomyces</taxon>
    </lineage>
</organism>
<proteinExistence type="predicted"/>
<accession>Q3E807</accession>
<accession>D6W279</accession>
<name>YO011_YEAST</name>
<protein>
    <recommendedName>
        <fullName>Uncharacterized protein YOR011W-A</fullName>
    </recommendedName>
</protein>
<sequence>MAKSVFNFFHFEILEYLNRFVYHSQYFLPYYCSLEVLGKSRKNWTFQYWCLYITTDKKIIKKKDFYHR</sequence>